<protein>
    <recommendedName>
        <fullName>Histidine--tRNA ligase, cytoplasmic</fullName>
        <ecNumber evidence="2">6.1.1.21</ecNumber>
    </recommendedName>
    <alternativeName>
        <fullName>Histidyl-tRNA synthetase</fullName>
        <shortName>HisRS</shortName>
    </alternativeName>
</protein>
<gene>
    <name type="primary">hars1</name>
    <name type="synonym">hars</name>
    <name type="synonym">hiss</name>
</gene>
<accession>P70076</accession>
<name>HARS1_TAKRU</name>
<sequence>MLAMHCARVCSVLMGCRTTTRALSIRSFPGVTLAQIDEEVAKLLELKAHLGGDDGKHQFVLKTAKGTRDYNPKQMAIREKVFNTIVSCFKRHGAETIDTPVFELKETLTGKYGEDSKLIYDLKDQGGELLSLRYDLTVPFARYLAMNKITNIKRYHIAKVYRRDNPAMTRGRYREFYQCDFDIAGQYDAMIPDAECLKIVHEILSELDLGDFRIKVNDRRILDGMFAVCGVPDNMFRTICSTVDKLDKLPWEAVKNEMVNEKGLSEEAADQIGVYVGMQGGMDLAERLLQDQKMCQSTQACAGLTDIKLLFSYLQLFQVTDKVVFDLSLARGLDYYTGIIYEAILTQAGVAPVAPETSNEAPTEECVTVGSVAGGGRYDGLVGMFDPKGRKVPCVGVSIGIERIFSIMEQKAEASTEKIRTTEVQVMVAAAQKNLLEERLRLITELWNAGIKAELMYKKSPKLLSQLQHCEESGIPLVAILGEQELKNGVVKLRNVATRDEVDISRADLIAEIKKRTSA</sequence>
<dbReference type="EC" id="6.1.1.21" evidence="2"/>
<dbReference type="EMBL" id="Z54243">
    <property type="protein sequence ID" value="CAA91012.1"/>
    <property type="molecule type" value="Genomic_DNA"/>
</dbReference>
<dbReference type="RefSeq" id="XP_011616429.1">
    <property type="nucleotide sequence ID" value="XM_011618127.1"/>
</dbReference>
<dbReference type="SMR" id="P70076"/>
<dbReference type="FunCoup" id="P70076">
    <property type="interactions" value="1656"/>
</dbReference>
<dbReference type="STRING" id="31033.ENSTRUP00000080690"/>
<dbReference type="Ensembl" id="ENSTRUT00000023098.3">
    <property type="protein sequence ID" value="ENSTRUP00000023002.3"/>
    <property type="gene ID" value="ENSTRUG00000009144.3"/>
</dbReference>
<dbReference type="eggNOG" id="KOG1936">
    <property type="taxonomic scope" value="Eukaryota"/>
</dbReference>
<dbReference type="GeneTree" id="ENSGT00390000005922"/>
<dbReference type="InParanoid" id="P70076"/>
<dbReference type="OrthoDB" id="1906957at2759"/>
<dbReference type="BRENDA" id="6.1.1.21">
    <property type="organism ID" value="6209"/>
</dbReference>
<dbReference type="Proteomes" id="UP000005226">
    <property type="component" value="Chromosome 14"/>
</dbReference>
<dbReference type="GO" id="GO:0005737">
    <property type="term" value="C:cytoplasm"/>
    <property type="evidence" value="ECO:0000250"/>
    <property type="project" value="UniProtKB"/>
</dbReference>
<dbReference type="GO" id="GO:0005829">
    <property type="term" value="C:cytosol"/>
    <property type="evidence" value="ECO:0007669"/>
    <property type="project" value="TreeGrafter"/>
</dbReference>
<dbReference type="GO" id="GO:0005739">
    <property type="term" value="C:mitochondrion"/>
    <property type="evidence" value="ECO:0007669"/>
    <property type="project" value="TreeGrafter"/>
</dbReference>
<dbReference type="GO" id="GO:0005524">
    <property type="term" value="F:ATP binding"/>
    <property type="evidence" value="ECO:0000250"/>
    <property type="project" value="UniProtKB"/>
</dbReference>
<dbReference type="GO" id="GO:0004821">
    <property type="term" value="F:histidine-tRNA ligase activity"/>
    <property type="evidence" value="ECO:0000250"/>
    <property type="project" value="UniProtKB"/>
</dbReference>
<dbReference type="GO" id="GO:0042803">
    <property type="term" value="F:protein homodimerization activity"/>
    <property type="evidence" value="ECO:0000250"/>
    <property type="project" value="UniProtKB"/>
</dbReference>
<dbReference type="GO" id="GO:0003723">
    <property type="term" value="F:RNA binding"/>
    <property type="evidence" value="ECO:0007669"/>
    <property type="project" value="TreeGrafter"/>
</dbReference>
<dbReference type="GO" id="GO:0006427">
    <property type="term" value="P:histidyl-tRNA aminoacylation"/>
    <property type="evidence" value="ECO:0000250"/>
    <property type="project" value="UniProtKB"/>
</dbReference>
<dbReference type="GO" id="GO:0032543">
    <property type="term" value="P:mitochondrial translation"/>
    <property type="evidence" value="ECO:0007669"/>
    <property type="project" value="TreeGrafter"/>
</dbReference>
<dbReference type="CDD" id="cd00773">
    <property type="entry name" value="HisRS-like_core"/>
    <property type="match status" value="1"/>
</dbReference>
<dbReference type="CDD" id="cd00859">
    <property type="entry name" value="HisRS_anticodon"/>
    <property type="match status" value="1"/>
</dbReference>
<dbReference type="FunFam" id="3.40.50.800:FF:000008">
    <property type="entry name" value="histidine--tRNA ligase, cytoplasmic isoform X1"/>
    <property type="match status" value="1"/>
</dbReference>
<dbReference type="FunFam" id="3.30.930.10:FF:000021">
    <property type="entry name" value="Probable histidine--tRNA ligase, mitochondrial"/>
    <property type="match status" value="1"/>
</dbReference>
<dbReference type="Gene3D" id="3.40.50.800">
    <property type="entry name" value="Anticodon-binding domain"/>
    <property type="match status" value="1"/>
</dbReference>
<dbReference type="Gene3D" id="3.30.930.10">
    <property type="entry name" value="Bira Bifunctional Protein, Domain 2"/>
    <property type="match status" value="1"/>
</dbReference>
<dbReference type="HAMAP" id="MF_00127">
    <property type="entry name" value="His_tRNA_synth"/>
    <property type="match status" value="1"/>
</dbReference>
<dbReference type="InterPro" id="IPR006195">
    <property type="entry name" value="aa-tRNA-synth_II"/>
</dbReference>
<dbReference type="InterPro" id="IPR045864">
    <property type="entry name" value="aa-tRNA-synth_II/BPL/LPL"/>
</dbReference>
<dbReference type="InterPro" id="IPR004154">
    <property type="entry name" value="Anticodon-bd"/>
</dbReference>
<dbReference type="InterPro" id="IPR036621">
    <property type="entry name" value="Anticodon-bd_dom_sf"/>
</dbReference>
<dbReference type="InterPro" id="IPR015807">
    <property type="entry name" value="His-tRNA-ligase"/>
</dbReference>
<dbReference type="InterPro" id="IPR041715">
    <property type="entry name" value="HisRS-like_core"/>
</dbReference>
<dbReference type="InterPro" id="IPR004516">
    <property type="entry name" value="HisRS/HisZ"/>
</dbReference>
<dbReference type="InterPro" id="IPR033656">
    <property type="entry name" value="HisRS_anticodon"/>
</dbReference>
<dbReference type="NCBIfam" id="TIGR00442">
    <property type="entry name" value="hisS"/>
    <property type="match status" value="1"/>
</dbReference>
<dbReference type="PANTHER" id="PTHR11476:SF7">
    <property type="entry name" value="HISTIDINE--TRNA LIGASE"/>
    <property type="match status" value="1"/>
</dbReference>
<dbReference type="PANTHER" id="PTHR11476">
    <property type="entry name" value="HISTIDYL-TRNA SYNTHETASE"/>
    <property type="match status" value="1"/>
</dbReference>
<dbReference type="Pfam" id="PF03129">
    <property type="entry name" value="HGTP_anticodon"/>
    <property type="match status" value="1"/>
</dbReference>
<dbReference type="Pfam" id="PF13393">
    <property type="entry name" value="tRNA-synt_His"/>
    <property type="match status" value="1"/>
</dbReference>
<dbReference type="PIRSF" id="PIRSF001549">
    <property type="entry name" value="His-tRNA_synth"/>
    <property type="match status" value="1"/>
</dbReference>
<dbReference type="SUPFAM" id="SSF52954">
    <property type="entry name" value="Class II aaRS ABD-related"/>
    <property type="match status" value="1"/>
</dbReference>
<dbReference type="SUPFAM" id="SSF55681">
    <property type="entry name" value="Class II aaRS and biotin synthetases"/>
    <property type="match status" value="1"/>
</dbReference>
<dbReference type="PROSITE" id="PS50862">
    <property type="entry name" value="AA_TRNA_LIGASE_II"/>
    <property type="match status" value="1"/>
</dbReference>
<keyword id="KW-0030">Aminoacyl-tRNA synthetase</keyword>
<keyword id="KW-0067">ATP-binding</keyword>
<keyword id="KW-0963">Cytoplasm</keyword>
<keyword id="KW-0436">Ligase</keyword>
<keyword id="KW-0547">Nucleotide-binding</keyword>
<keyword id="KW-0648">Protein biosynthesis</keyword>
<keyword id="KW-1185">Reference proteome</keyword>
<feature type="chain" id="PRO_0000136337" description="Histidine--tRNA ligase, cytoplasmic">
    <location>
        <begin position="1"/>
        <end position="519"/>
    </location>
</feature>
<feature type="binding site" evidence="2">
    <location>
        <begin position="135"/>
        <end position="137"/>
    </location>
    <ligand>
        <name>L-histidine</name>
        <dbReference type="ChEBI" id="CHEBI:57595"/>
    </ligand>
</feature>
<feature type="binding site" evidence="2">
    <location>
        <position position="162"/>
    </location>
    <ligand>
        <name>L-histidine</name>
        <dbReference type="ChEBI" id="CHEBI:57595"/>
    </ligand>
</feature>
<feature type="binding site" evidence="2">
    <location>
        <position position="178"/>
    </location>
    <ligand>
        <name>L-histidine</name>
        <dbReference type="ChEBI" id="CHEBI:57595"/>
    </ligand>
</feature>
<feature type="binding site" evidence="2">
    <location>
        <position position="182"/>
    </location>
    <ligand>
        <name>L-histidine</name>
        <dbReference type="ChEBI" id="CHEBI:57595"/>
    </ligand>
</feature>
<feature type="binding site" evidence="2">
    <location>
        <position position="331"/>
    </location>
    <ligand>
        <name>L-histidine</name>
        <dbReference type="ChEBI" id="CHEBI:57595"/>
    </ligand>
</feature>
<feature type="binding site" evidence="2">
    <location>
        <begin position="335"/>
        <end position="336"/>
    </location>
    <ligand>
        <name>L-histidine</name>
        <dbReference type="ChEBI" id="CHEBI:57595"/>
    </ligand>
</feature>
<reference key="1">
    <citation type="journal article" date="1996" name="Proc. Natl. Acad. Sci. U.S.A.">
        <title>Translocation events in the evolution of aminoacyl-tRNA synthetases.</title>
        <authorList>
            <person name="Brenner S."/>
            <person name="Corrochano L.M."/>
        </authorList>
    </citation>
    <scope>NUCLEOTIDE SEQUENCE [GENOMIC DNA]</scope>
    <source>
        <tissue>Testis</tissue>
    </source>
</reference>
<evidence type="ECO:0000250" key="1">
    <source>
        <dbReference type="UniProtKB" id="F1Q5D5"/>
    </source>
</evidence>
<evidence type="ECO:0000250" key="2">
    <source>
        <dbReference type="UniProtKB" id="P12081"/>
    </source>
</evidence>
<evidence type="ECO:0000305" key="3"/>
<proteinExistence type="inferred from homology"/>
<comment type="function">
    <text evidence="2">Catalyzes the ATP-dependent ligation of histidine to the 3'-end of its cognate tRNA, via the formation of an aminoacyl-adenylate intermediate (His-AMP). Plays a role in axon guidance.</text>
</comment>
<comment type="catalytic activity">
    <reaction evidence="2">
        <text>tRNA(His) + L-histidine + ATP = L-histidyl-tRNA(His) + AMP + diphosphate + H(+)</text>
        <dbReference type="Rhea" id="RHEA:17313"/>
        <dbReference type="Rhea" id="RHEA-COMP:9665"/>
        <dbReference type="Rhea" id="RHEA-COMP:9689"/>
        <dbReference type="ChEBI" id="CHEBI:15378"/>
        <dbReference type="ChEBI" id="CHEBI:30616"/>
        <dbReference type="ChEBI" id="CHEBI:33019"/>
        <dbReference type="ChEBI" id="CHEBI:57595"/>
        <dbReference type="ChEBI" id="CHEBI:78442"/>
        <dbReference type="ChEBI" id="CHEBI:78527"/>
        <dbReference type="ChEBI" id="CHEBI:456215"/>
        <dbReference type="EC" id="6.1.1.21"/>
    </reaction>
</comment>
<comment type="subunit">
    <text evidence="2">Homodimer.</text>
</comment>
<comment type="subcellular location">
    <subcellularLocation>
        <location evidence="1">Cytoplasm</location>
    </subcellularLocation>
</comment>
<comment type="similarity">
    <text evidence="3">Belongs to the class-II aminoacyl-tRNA synthetase family.</text>
</comment>
<organism>
    <name type="scientific">Takifugu rubripes</name>
    <name type="common">Japanese pufferfish</name>
    <name type="synonym">Fugu rubripes</name>
    <dbReference type="NCBI Taxonomy" id="31033"/>
    <lineage>
        <taxon>Eukaryota</taxon>
        <taxon>Metazoa</taxon>
        <taxon>Chordata</taxon>
        <taxon>Craniata</taxon>
        <taxon>Vertebrata</taxon>
        <taxon>Euteleostomi</taxon>
        <taxon>Actinopterygii</taxon>
        <taxon>Neopterygii</taxon>
        <taxon>Teleostei</taxon>
        <taxon>Neoteleostei</taxon>
        <taxon>Acanthomorphata</taxon>
        <taxon>Eupercaria</taxon>
        <taxon>Tetraodontiformes</taxon>
        <taxon>Tetradontoidea</taxon>
        <taxon>Tetraodontidae</taxon>
        <taxon>Takifugu</taxon>
    </lineage>
</organism>